<evidence type="ECO:0000255" key="1">
    <source>
        <dbReference type="HAMAP-Rule" id="MF_00180"/>
    </source>
</evidence>
<protein>
    <recommendedName>
        <fullName evidence="1">3,4-dihydroxy-2-butanone 4-phosphate synthase</fullName>
        <shortName evidence="1">DHBP synthase</shortName>
        <ecNumber evidence="1">4.1.99.12</ecNumber>
    </recommendedName>
</protein>
<sequence length="217" mass="23353">MNQTLLSSFGTPFERVENALAALREGRGVMVLDDEDRENEGDMIFPAETMTVEQMALTIRHGSGIVCLCITEDRRKQLDLPMMVENNTSAYGTGFTVTIEAAEGVTTGVSAADRITTVRAAIADGAKPSDLNRPGHVFPLRAQAGGVLTRGGHTEATIDLMTLAGFKPAGVLCELTNDDGTMARAPECIEFANKHNMALVTIEDLVAYRQAHERKAS</sequence>
<name>RIBB_ECOBW</name>
<keyword id="KW-0456">Lyase</keyword>
<keyword id="KW-0460">Magnesium</keyword>
<keyword id="KW-0464">Manganese</keyword>
<keyword id="KW-0479">Metal-binding</keyword>
<keyword id="KW-0686">Riboflavin biosynthesis</keyword>
<proteinExistence type="inferred from homology"/>
<reference key="1">
    <citation type="journal article" date="2009" name="J. Bacteriol.">
        <title>Genomic sequencing reveals regulatory mutations and recombinational events in the widely used MC4100 lineage of Escherichia coli K-12.</title>
        <authorList>
            <person name="Ferenci T."/>
            <person name="Zhou Z."/>
            <person name="Betteridge T."/>
            <person name="Ren Y."/>
            <person name="Liu Y."/>
            <person name="Feng L."/>
            <person name="Reeves P.R."/>
            <person name="Wang L."/>
        </authorList>
    </citation>
    <scope>NUCLEOTIDE SEQUENCE [LARGE SCALE GENOMIC DNA]</scope>
    <source>
        <strain>K12 / MC4100 / BW2952</strain>
    </source>
</reference>
<accession>C4ZQV9</accession>
<gene>
    <name evidence="1" type="primary">ribB</name>
    <name type="ordered locus">BWG_2753</name>
</gene>
<dbReference type="EC" id="4.1.99.12" evidence="1"/>
<dbReference type="EMBL" id="CP001396">
    <property type="protein sequence ID" value="ACR61780.1"/>
    <property type="molecule type" value="Genomic_DNA"/>
</dbReference>
<dbReference type="RefSeq" id="WP_001076997.1">
    <property type="nucleotide sequence ID" value="NC_012759.1"/>
</dbReference>
<dbReference type="SMR" id="C4ZQV9"/>
<dbReference type="GeneID" id="93778953"/>
<dbReference type="KEGG" id="ebw:BWG_2753"/>
<dbReference type="HOGENOM" id="CLU_020273_3_0_6"/>
<dbReference type="UniPathway" id="UPA00275">
    <property type="reaction ID" value="UER00399"/>
</dbReference>
<dbReference type="GO" id="GO:0005829">
    <property type="term" value="C:cytosol"/>
    <property type="evidence" value="ECO:0007669"/>
    <property type="project" value="TreeGrafter"/>
</dbReference>
<dbReference type="GO" id="GO:0008686">
    <property type="term" value="F:3,4-dihydroxy-2-butanone-4-phosphate synthase activity"/>
    <property type="evidence" value="ECO:0007669"/>
    <property type="project" value="UniProtKB-UniRule"/>
</dbReference>
<dbReference type="GO" id="GO:0000287">
    <property type="term" value="F:magnesium ion binding"/>
    <property type="evidence" value="ECO:0007669"/>
    <property type="project" value="UniProtKB-UniRule"/>
</dbReference>
<dbReference type="GO" id="GO:0030145">
    <property type="term" value="F:manganese ion binding"/>
    <property type="evidence" value="ECO:0007669"/>
    <property type="project" value="UniProtKB-UniRule"/>
</dbReference>
<dbReference type="GO" id="GO:0009231">
    <property type="term" value="P:riboflavin biosynthetic process"/>
    <property type="evidence" value="ECO:0007669"/>
    <property type="project" value="UniProtKB-UniRule"/>
</dbReference>
<dbReference type="FunFam" id="3.90.870.10:FF:000002">
    <property type="entry name" value="3,4-dihydroxy-2-butanone 4-phosphate synthase"/>
    <property type="match status" value="1"/>
</dbReference>
<dbReference type="Gene3D" id="3.90.870.10">
    <property type="entry name" value="DHBP synthase"/>
    <property type="match status" value="1"/>
</dbReference>
<dbReference type="HAMAP" id="MF_00180">
    <property type="entry name" value="RibB"/>
    <property type="match status" value="1"/>
</dbReference>
<dbReference type="InterPro" id="IPR017945">
    <property type="entry name" value="DHBP_synth_RibB-like_a/b_dom"/>
</dbReference>
<dbReference type="InterPro" id="IPR000422">
    <property type="entry name" value="DHBP_synthase_RibB"/>
</dbReference>
<dbReference type="NCBIfam" id="TIGR00506">
    <property type="entry name" value="ribB"/>
    <property type="match status" value="1"/>
</dbReference>
<dbReference type="PANTHER" id="PTHR21327:SF38">
    <property type="entry name" value="3,4-DIHYDROXY-2-BUTANONE 4-PHOSPHATE SYNTHASE"/>
    <property type="match status" value="1"/>
</dbReference>
<dbReference type="PANTHER" id="PTHR21327">
    <property type="entry name" value="GTP CYCLOHYDROLASE II-RELATED"/>
    <property type="match status" value="1"/>
</dbReference>
<dbReference type="Pfam" id="PF00926">
    <property type="entry name" value="DHBP_synthase"/>
    <property type="match status" value="1"/>
</dbReference>
<dbReference type="SUPFAM" id="SSF55821">
    <property type="entry name" value="YrdC/RibB"/>
    <property type="match status" value="1"/>
</dbReference>
<comment type="function">
    <text evidence="1">Catalyzes the conversion of D-ribulose 5-phosphate to formate and 3,4-dihydroxy-2-butanone 4-phosphate.</text>
</comment>
<comment type="catalytic activity">
    <reaction evidence="1">
        <text>D-ribulose 5-phosphate = (2S)-2-hydroxy-3-oxobutyl phosphate + formate + H(+)</text>
        <dbReference type="Rhea" id="RHEA:18457"/>
        <dbReference type="ChEBI" id="CHEBI:15378"/>
        <dbReference type="ChEBI" id="CHEBI:15740"/>
        <dbReference type="ChEBI" id="CHEBI:58121"/>
        <dbReference type="ChEBI" id="CHEBI:58830"/>
        <dbReference type="EC" id="4.1.99.12"/>
    </reaction>
</comment>
<comment type="cofactor">
    <cofactor evidence="1">
        <name>Mg(2+)</name>
        <dbReference type="ChEBI" id="CHEBI:18420"/>
    </cofactor>
    <cofactor evidence="1">
        <name>Mn(2+)</name>
        <dbReference type="ChEBI" id="CHEBI:29035"/>
    </cofactor>
    <text evidence="1">Binds 2 divalent metal cations per subunit. Magnesium or manganese.</text>
</comment>
<comment type="pathway">
    <text evidence="1">Cofactor biosynthesis; riboflavin biosynthesis; 2-hydroxy-3-oxobutyl phosphate from D-ribulose 5-phosphate: step 1/1.</text>
</comment>
<comment type="subunit">
    <text evidence="1">Homodimer.</text>
</comment>
<comment type="similarity">
    <text evidence="1">Belongs to the DHBP synthase family.</text>
</comment>
<organism>
    <name type="scientific">Escherichia coli (strain K12 / MC4100 / BW2952)</name>
    <dbReference type="NCBI Taxonomy" id="595496"/>
    <lineage>
        <taxon>Bacteria</taxon>
        <taxon>Pseudomonadati</taxon>
        <taxon>Pseudomonadota</taxon>
        <taxon>Gammaproteobacteria</taxon>
        <taxon>Enterobacterales</taxon>
        <taxon>Enterobacteriaceae</taxon>
        <taxon>Escherichia</taxon>
    </lineage>
</organism>
<feature type="chain" id="PRO_1000203819" description="3,4-dihydroxy-2-butanone 4-phosphate synthase">
    <location>
        <begin position="1"/>
        <end position="217"/>
    </location>
</feature>
<feature type="binding site" evidence="1">
    <location>
        <begin position="37"/>
        <end position="38"/>
    </location>
    <ligand>
        <name>D-ribulose 5-phosphate</name>
        <dbReference type="ChEBI" id="CHEBI:58121"/>
    </ligand>
</feature>
<feature type="binding site" evidence="1">
    <location>
        <position position="38"/>
    </location>
    <ligand>
        <name>Mg(2+)</name>
        <dbReference type="ChEBI" id="CHEBI:18420"/>
        <label>1</label>
    </ligand>
</feature>
<feature type="binding site" evidence="1">
    <location>
        <position position="38"/>
    </location>
    <ligand>
        <name>Mg(2+)</name>
        <dbReference type="ChEBI" id="CHEBI:18420"/>
        <label>2</label>
    </ligand>
</feature>
<feature type="binding site" evidence="1">
    <location>
        <position position="42"/>
    </location>
    <ligand>
        <name>D-ribulose 5-phosphate</name>
        <dbReference type="ChEBI" id="CHEBI:58121"/>
    </ligand>
</feature>
<feature type="binding site" evidence="1">
    <location>
        <begin position="150"/>
        <end position="154"/>
    </location>
    <ligand>
        <name>D-ribulose 5-phosphate</name>
        <dbReference type="ChEBI" id="CHEBI:58121"/>
    </ligand>
</feature>
<feature type="binding site" evidence="1">
    <location>
        <position position="153"/>
    </location>
    <ligand>
        <name>Mg(2+)</name>
        <dbReference type="ChEBI" id="CHEBI:18420"/>
        <label>2</label>
    </ligand>
</feature>
<feature type="binding site" evidence="1">
    <location>
        <position position="174"/>
    </location>
    <ligand>
        <name>D-ribulose 5-phosphate</name>
        <dbReference type="ChEBI" id="CHEBI:58121"/>
    </ligand>
</feature>
<feature type="site" description="Essential for catalytic activity" evidence="1">
    <location>
        <position position="136"/>
    </location>
</feature>
<feature type="site" description="Essential for catalytic activity" evidence="1">
    <location>
        <position position="174"/>
    </location>
</feature>